<gene>
    <name evidence="6" type="primary">FLAP1</name>
    <name evidence="8" type="ordered locus">At1g54520</name>
    <name evidence="9" type="ORF">F20D21.34</name>
</gene>
<dbReference type="EMBL" id="AC005287">
    <property type="protein sequence ID" value="AAD25630.1"/>
    <property type="status" value="ALT_SEQ"/>
    <property type="molecule type" value="Genomic_DNA"/>
</dbReference>
<dbReference type="EMBL" id="CP002684">
    <property type="protein sequence ID" value="AEE33114.1"/>
    <property type="molecule type" value="Genomic_DNA"/>
</dbReference>
<dbReference type="EMBL" id="AF327533">
    <property type="protein sequence ID" value="AAG42914.1"/>
    <property type="molecule type" value="mRNA"/>
</dbReference>
<dbReference type="EMBL" id="AF372887">
    <property type="protein sequence ID" value="AAK49603.1"/>
    <property type="molecule type" value="mRNA"/>
</dbReference>
<dbReference type="EMBL" id="AY093070">
    <property type="protein sequence ID" value="AAM13069.1"/>
    <property type="molecule type" value="mRNA"/>
</dbReference>
<dbReference type="EMBL" id="BT004556">
    <property type="protein sequence ID" value="AAO42802.1"/>
    <property type="molecule type" value="mRNA"/>
</dbReference>
<dbReference type="EMBL" id="AY085198">
    <property type="protein sequence ID" value="AAM61748.1"/>
    <property type="molecule type" value="mRNA"/>
</dbReference>
<dbReference type="PIR" id="C96587">
    <property type="entry name" value="C96587"/>
</dbReference>
<dbReference type="RefSeq" id="NP_564660.1">
    <property type="nucleotide sequence ID" value="NM_104330.4"/>
</dbReference>
<dbReference type="SMR" id="Q8RWI0"/>
<dbReference type="FunCoup" id="Q8RWI0">
    <property type="interactions" value="1172"/>
</dbReference>
<dbReference type="STRING" id="3702.Q8RWI0"/>
<dbReference type="iPTMnet" id="Q8RWI0"/>
<dbReference type="PaxDb" id="3702-AT1G54520.1"/>
<dbReference type="ProteomicsDB" id="175432"/>
<dbReference type="EnsemblPlants" id="AT1G54520.1">
    <property type="protein sequence ID" value="AT1G54520.1"/>
    <property type="gene ID" value="AT1G54520"/>
</dbReference>
<dbReference type="GeneID" id="841894"/>
<dbReference type="Gramene" id="AT1G54520.1">
    <property type="protein sequence ID" value="AT1G54520.1"/>
    <property type="gene ID" value="AT1G54520"/>
</dbReference>
<dbReference type="KEGG" id="ath:AT1G54520"/>
<dbReference type="Araport" id="AT1G54520"/>
<dbReference type="TAIR" id="AT1G54520">
    <property type="gene designation" value="FLAP1"/>
</dbReference>
<dbReference type="eggNOG" id="ENOG502QUI9">
    <property type="taxonomic scope" value="Eukaryota"/>
</dbReference>
<dbReference type="HOGENOM" id="CLU_047333_0_0_1"/>
<dbReference type="OMA" id="IEVLWTP"/>
<dbReference type="OrthoDB" id="542507at2759"/>
<dbReference type="PRO" id="PR:Q8RWI0"/>
<dbReference type="Proteomes" id="UP000006548">
    <property type="component" value="Chromosome 1"/>
</dbReference>
<dbReference type="ExpressionAtlas" id="Q8RWI0">
    <property type="expression patterns" value="baseline and differential"/>
</dbReference>
<dbReference type="GO" id="GO:0009507">
    <property type="term" value="C:chloroplast"/>
    <property type="evidence" value="ECO:0007005"/>
    <property type="project" value="TAIR"/>
</dbReference>
<dbReference type="GO" id="GO:0009941">
    <property type="term" value="C:chloroplast envelope"/>
    <property type="evidence" value="ECO:0000314"/>
    <property type="project" value="TAIR"/>
</dbReference>
<dbReference type="GO" id="GO:0031969">
    <property type="term" value="C:chloroplast membrane"/>
    <property type="evidence" value="ECO:0007669"/>
    <property type="project" value="UniProtKB-SubCell"/>
</dbReference>
<dbReference type="GO" id="GO:0009535">
    <property type="term" value="C:chloroplast thylakoid membrane"/>
    <property type="evidence" value="ECO:0000314"/>
    <property type="project" value="TAIR"/>
</dbReference>
<dbReference type="GO" id="GO:0005634">
    <property type="term" value="C:nucleus"/>
    <property type="evidence" value="ECO:0007005"/>
    <property type="project" value="TAIR"/>
</dbReference>
<dbReference type="GO" id="GO:0010196">
    <property type="term" value="P:nonphotochemical quenching"/>
    <property type="evidence" value="ECO:0000315"/>
    <property type="project" value="UniProtKB"/>
</dbReference>
<dbReference type="GO" id="GO:0009643">
    <property type="term" value="P:photosynthetic acclimation"/>
    <property type="evidence" value="ECO:0000315"/>
    <property type="project" value="TAIR"/>
</dbReference>
<dbReference type="GO" id="GO:0009416">
    <property type="term" value="P:response to light stimulus"/>
    <property type="evidence" value="ECO:0000315"/>
    <property type="project" value="UniProtKB"/>
</dbReference>
<dbReference type="InterPro" id="IPR010903">
    <property type="entry name" value="DUF1517"/>
</dbReference>
<dbReference type="InterPro" id="IPR053023">
    <property type="entry name" value="FLAP_modulator"/>
</dbReference>
<dbReference type="PANTHER" id="PTHR33975">
    <property type="entry name" value="MYELIN-ASSOCIATED OLIGODENDROCYTE BASIC PROTEIN"/>
    <property type="match status" value="1"/>
</dbReference>
<dbReference type="PANTHER" id="PTHR33975:SF2">
    <property type="entry name" value="MYELIN-ASSOCIATED OLIGODENDROCYTE BASIC PROTEIN"/>
    <property type="match status" value="1"/>
</dbReference>
<dbReference type="Pfam" id="PF07466">
    <property type="entry name" value="DUF1517"/>
    <property type="match status" value="1"/>
</dbReference>
<dbReference type="PIRSF" id="PIRSF037221">
    <property type="entry name" value="DUF1517"/>
    <property type="match status" value="1"/>
</dbReference>
<sequence>MASSSTFLELTPFQWNQPLPYTQRPHHRTVLLYSKPQRRSNSIRLQISVKYKQSTSSSDPDLRSNFNPFEQIAIQVKKALDSLKKPAIAAVLLGLLLFYDPNSALAASGGRIGGNSFSSRSRSSSSSSSQSYSVPRTSNPSFSYSARTAPYYGPSPFGGGFVGPAVGFGFGGFSSFSLILVGFAAFVLVSGFLSDRSQDDSILTDTQKTSVIKLQVGLLGLGRTLQQDFNRLAESSDTSTPEGLSYVLTEATLALLRHPDYCISCYSSVDVKPSIEKGEKRFNQLSIEERGKFDEETLVNVNSIKRQSSKIRKASGFSNEYIVVTILMAAEGIHKLPPINGTTDLKEALLKLGSIPRNKIMAVEVLWTPQNEADALSERELLEDYPLLRPL</sequence>
<proteinExistence type="evidence at protein level"/>
<organism>
    <name type="scientific">Arabidopsis thaliana</name>
    <name type="common">Mouse-ear cress</name>
    <dbReference type="NCBI Taxonomy" id="3702"/>
    <lineage>
        <taxon>Eukaryota</taxon>
        <taxon>Viridiplantae</taxon>
        <taxon>Streptophyta</taxon>
        <taxon>Embryophyta</taxon>
        <taxon>Tracheophyta</taxon>
        <taxon>Spermatophyta</taxon>
        <taxon>Magnoliopsida</taxon>
        <taxon>eudicotyledons</taxon>
        <taxon>Gunneridae</taxon>
        <taxon>Pentapetalae</taxon>
        <taxon>rosids</taxon>
        <taxon>malvids</taxon>
        <taxon>Brassicales</taxon>
        <taxon>Brassicaceae</taxon>
        <taxon>Camelineae</taxon>
        <taxon>Arabidopsis</taxon>
    </lineage>
</organism>
<accession>Q8RWI0</accession>
<accession>Q9FPD7</accession>
<accession>Q9SLI1</accession>
<reference key="1">
    <citation type="journal article" date="2000" name="Nature">
        <title>Sequence and analysis of chromosome 1 of the plant Arabidopsis thaliana.</title>
        <authorList>
            <person name="Theologis A."/>
            <person name="Ecker J.R."/>
            <person name="Palm C.J."/>
            <person name="Federspiel N.A."/>
            <person name="Kaul S."/>
            <person name="White O."/>
            <person name="Alonso J."/>
            <person name="Altafi H."/>
            <person name="Araujo R."/>
            <person name="Bowman C.L."/>
            <person name="Brooks S.Y."/>
            <person name="Buehler E."/>
            <person name="Chan A."/>
            <person name="Chao Q."/>
            <person name="Chen H."/>
            <person name="Cheuk R.F."/>
            <person name="Chin C.W."/>
            <person name="Chung M.K."/>
            <person name="Conn L."/>
            <person name="Conway A.B."/>
            <person name="Conway A.R."/>
            <person name="Creasy T.H."/>
            <person name="Dewar K."/>
            <person name="Dunn P."/>
            <person name="Etgu P."/>
            <person name="Feldblyum T.V."/>
            <person name="Feng J.-D."/>
            <person name="Fong B."/>
            <person name="Fujii C.Y."/>
            <person name="Gill J.E."/>
            <person name="Goldsmith A.D."/>
            <person name="Haas B."/>
            <person name="Hansen N.F."/>
            <person name="Hughes B."/>
            <person name="Huizar L."/>
            <person name="Hunter J.L."/>
            <person name="Jenkins J."/>
            <person name="Johnson-Hopson C."/>
            <person name="Khan S."/>
            <person name="Khaykin E."/>
            <person name="Kim C.J."/>
            <person name="Koo H.L."/>
            <person name="Kremenetskaia I."/>
            <person name="Kurtz D.B."/>
            <person name="Kwan A."/>
            <person name="Lam B."/>
            <person name="Langin-Hooper S."/>
            <person name="Lee A."/>
            <person name="Lee J.M."/>
            <person name="Lenz C.A."/>
            <person name="Li J.H."/>
            <person name="Li Y.-P."/>
            <person name="Lin X."/>
            <person name="Liu S.X."/>
            <person name="Liu Z.A."/>
            <person name="Luros J.S."/>
            <person name="Maiti R."/>
            <person name="Marziali A."/>
            <person name="Militscher J."/>
            <person name="Miranda M."/>
            <person name="Nguyen M."/>
            <person name="Nierman W.C."/>
            <person name="Osborne B.I."/>
            <person name="Pai G."/>
            <person name="Peterson J."/>
            <person name="Pham P.K."/>
            <person name="Rizzo M."/>
            <person name="Rooney T."/>
            <person name="Rowley D."/>
            <person name="Sakano H."/>
            <person name="Salzberg S.L."/>
            <person name="Schwartz J.R."/>
            <person name="Shinn P."/>
            <person name="Southwick A.M."/>
            <person name="Sun H."/>
            <person name="Tallon L.J."/>
            <person name="Tambunga G."/>
            <person name="Toriumi M.J."/>
            <person name="Town C.D."/>
            <person name="Utterback T."/>
            <person name="Van Aken S."/>
            <person name="Vaysberg M."/>
            <person name="Vysotskaia V.S."/>
            <person name="Walker M."/>
            <person name="Wu D."/>
            <person name="Yu G."/>
            <person name="Fraser C.M."/>
            <person name="Venter J.C."/>
            <person name="Davis R.W."/>
        </authorList>
    </citation>
    <scope>NUCLEOTIDE SEQUENCE [LARGE SCALE GENOMIC DNA]</scope>
    <source>
        <strain>cv. Columbia</strain>
    </source>
</reference>
<reference key="2">
    <citation type="journal article" date="2017" name="Plant J.">
        <title>Araport11: a complete reannotation of the Arabidopsis thaliana reference genome.</title>
        <authorList>
            <person name="Cheng C.Y."/>
            <person name="Krishnakumar V."/>
            <person name="Chan A.P."/>
            <person name="Thibaud-Nissen F."/>
            <person name="Schobel S."/>
            <person name="Town C.D."/>
        </authorList>
    </citation>
    <scope>GENOME REANNOTATION</scope>
    <source>
        <strain>cv. Columbia</strain>
    </source>
</reference>
<reference key="3">
    <citation type="journal article" date="2003" name="Science">
        <title>Empirical analysis of transcriptional activity in the Arabidopsis genome.</title>
        <authorList>
            <person name="Yamada K."/>
            <person name="Lim J."/>
            <person name="Dale J.M."/>
            <person name="Chen H."/>
            <person name="Shinn P."/>
            <person name="Palm C.J."/>
            <person name="Southwick A.M."/>
            <person name="Wu H.C."/>
            <person name="Kim C.J."/>
            <person name="Nguyen M."/>
            <person name="Pham P.K."/>
            <person name="Cheuk R.F."/>
            <person name="Karlin-Newmann G."/>
            <person name="Liu S.X."/>
            <person name="Lam B."/>
            <person name="Sakano H."/>
            <person name="Wu T."/>
            <person name="Yu G."/>
            <person name="Miranda M."/>
            <person name="Quach H.L."/>
            <person name="Tripp M."/>
            <person name="Chang C.H."/>
            <person name="Lee J.M."/>
            <person name="Toriumi M.J."/>
            <person name="Chan M.M."/>
            <person name="Tang C.C."/>
            <person name="Onodera C.S."/>
            <person name="Deng J.M."/>
            <person name="Akiyama K."/>
            <person name="Ansari Y."/>
            <person name="Arakawa T."/>
            <person name="Banh J."/>
            <person name="Banno F."/>
            <person name="Bowser L."/>
            <person name="Brooks S.Y."/>
            <person name="Carninci P."/>
            <person name="Chao Q."/>
            <person name="Choy N."/>
            <person name="Enju A."/>
            <person name="Goldsmith A.D."/>
            <person name="Gurjal M."/>
            <person name="Hansen N.F."/>
            <person name="Hayashizaki Y."/>
            <person name="Johnson-Hopson C."/>
            <person name="Hsuan V.W."/>
            <person name="Iida K."/>
            <person name="Karnes M."/>
            <person name="Khan S."/>
            <person name="Koesema E."/>
            <person name="Ishida J."/>
            <person name="Jiang P.X."/>
            <person name="Jones T."/>
            <person name="Kawai J."/>
            <person name="Kamiya A."/>
            <person name="Meyers C."/>
            <person name="Nakajima M."/>
            <person name="Narusaka M."/>
            <person name="Seki M."/>
            <person name="Sakurai T."/>
            <person name="Satou M."/>
            <person name="Tamse R."/>
            <person name="Vaysberg M."/>
            <person name="Wallender E.K."/>
            <person name="Wong C."/>
            <person name="Yamamura Y."/>
            <person name="Yuan S."/>
            <person name="Shinozaki K."/>
            <person name="Davis R.W."/>
            <person name="Theologis A."/>
            <person name="Ecker J.R."/>
        </authorList>
    </citation>
    <scope>NUCLEOTIDE SEQUENCE [LARGE SCALE MRNA]</scope>
    <source>
        <strain>cv. Columbia</strain>
    </source>
</reference>
<reference key="4">
    <citation type="submission" date="2002-03" db="EMBL/GenBank/DDBJ databases">
        <title>Full-length cDNA from Arabidopsis thaliana.</title>
        <authorList>
            <person name="Brover V.V."/>
            <person name="Troukhan M.E."/>
            <person name="Alexandrov N.A."/>
            <person name="Lu Y.-P."/>
            <person name="Flavell R.B."/>
            <person name="Feldmann K.A."/>
        </authorList>
    </citation>
    <scope>NUCLEOTIDE SEQUENCE [LARGE SCALE MRNA]</scope>
</reference>
<reference key="5">
    <citation type="journal article" date="2009" name="Plant Physiol.">
        <title>Large-scale Arabidopsis phosphoproteome profiling reveals novel chloroplast kinase substrates and phosphorylation networks.</title>
        <authorList>
            <person name="Reiland S."/>
            <person name="Messerli G."/>
            <person name="Baerenfaller K."/>
            <person name="Gerrits B."/>
            <person name="Endler A."/>
            <person name="Grossmann J."/>
            <person name="Gruissem W."/>
            <person name="Baginsky S."/>
        </authorList>
    </citation>
    <scope>IDENTIFICATION BY MASS SPECTROMETRY [LARGE SCALE ANALYSIS]</scope>
</reference>
<reference key="6">
    <citation type="journal article" date="2017" name="Plant Cell Physiol.">
        <title>FLUCTUATING-LIGHT-ACCLIMATION PROTEIN1, Conserved in Oxygenic Phototrophs, Regulates H+ Homeostasis and Non-Photochemical Quenching in Chloroplasts.</title>
        <authorList>
            <person name="Sato R."/>
            <person name="Kono M."/>
            <person name="Harada K."/>
            <person name="Ohta H."/>
            <person name="Takaichi S."/>
            <person name="Masuda S."/>
        </authorList>
    </citation>
    <scope>FUNCTION</scope>
    <scope>DISRUPTION PHENOTYPE</scope>
    <scope>SUBCELLULAR LOCATION</scope>
    <source>
        <strain>cv. Columbia</strain>
    </source>
</reference>
<reference key="7">
    <citation type="journal article" date="2019" name="Photosyn. Res.">
        <title>Genetic characterization of a flap1 null mutation in Arabidopsis npq4 and pgr5 plants suggests that the regulatory role of FLAP1 involves the control of proton homeostasis in chloroplasts.</title>
        <authorList>
            <person name="Trinh M.D.L."/>
            <person name="Sato R."/>
            <person name="Masuda S."/>
        </authorList>
    </citation>
    <scope>FUNCTION</scope>
    <scope>DISRUPTION PHENOTYPE</scope>
    <source>
        <strain>cv. Columbia</strain>
    </source>
</reference>
<reference key="8">
    <citation type="journal article" date="2023" name="FEBS Lett.">
        <title>Arabidopsis mutants lacking DLDG1 and non-photochemical quenching-related proteins reveal the regulatory role of DLDG1 in chloroplast pH homeostasis.</title>
        <authorList>
            <person name="Suzuki K."/>
            <person name="Masuda S."/>
        </authorList>
    </citation>
    <scope>FUNCTION</scope>
    <scope>DISRUPTION PHENOTYPE</scope>
    <source>
        <strain>cv. Columbia</strain>
    </source>
</reference>
<name>FLAP1_ARATH</name>
<keyword id="KW-0150">Chloroplast</keyword>
<keyword id="KW-0472">Membrane</keyword>
<keyword id="KW-0934">Plastid</keyword>
<keyword id="KW-1185">Reference proteome</keyword>
<keyword id="KW-0793">Thylakoid</keyword>
<keyword id="KW-0809">Transit peptide</keyword>
<keyword id="KW-0812">Transmembrane</keyword>
<keyword id="KW-1133">Transmembrane helix</keyword>
<protein>
    <recommendedName>
        <fullName evidence="6">FLUCTUATING-LIGHT-ACCLIMATION protein 1, chloroplastic</fullName>
    </recommendedName>
</protein>
<feature type="transit peptide" description="Chloroplast" evidence="1">
    <location>
        <begin position="1"/>
        <end position="48"/>
    </location>
</feature>
<feature type="chain" id="PRO_0000459558" description="FLUCTUATING-LIGHT-ACCLIMATION protein 1, chloroplastic">
    <location>
        <begin position="49"/>
        <end position="391"/>
    </location>
</feature>
<feature type="transmembrane region" description="Helical" evidence="1">
    <location>
        <begin position="87"/>
        <end position="107"/>
    </location>
</feature>
<feature type="transmembrane region" description="Helical" evidence="1">
    <location>
        <begin position="168"/>
        <end position="188"/>
    </location>
</feature>
<feature type="transmembrane region" description="Helical" evidence="1">
    <location>
        <begin position="321"/>
        <end position="341"/>
    </location>
</feature>
<feature type="region of interest" description="Disordered" evidence="2">
    <location>
        <begin position="116"/>
        <end position="140"/>
    </location>
</feature>
<feature type="compositionally biased region" description="Low complexity" evidence="2">
    <location>
        <begin position="116"/>
        <end position="138"/>
    </location>
</feature>
<feature type="sequence conflict" description="In Ref. 3; AAG42914/AAK49603/AAO42802." evidence="7" ref="3">
    <original>T</original>
    <variation>I</variation>
    <location>
        <position position="204"/>
    </location>
</feature>
<comment type="function">
    <text evidence="3 4 5">Monitors proton H(+) homeostasis in chloroplasts to manipulate luminal acidification levels appropriately to balance photoprotection and photochemical processes (PubMed:30390180). Required during acclimation response to fluctuating light (e.g. photosynthetic activity optimization) by controlling non-photochemical quenching (NPQ); acts independently from DLDG1 (PubMed:29016945, PubMed:37339934).</text>
</comment>
<comment type="subcellular location">
    <subcellularLocation>
        <location evidence="3">Plastid</location>
        <location evidence="3">Chloroplast thylakoid membrane</location>
        <topology evidence="1">Multi-pass membrane protein</topology>
    </subcellularLocation>
    <subcellularLocation>
        <location evidence="3">Plastid</location>
        <location evidence="3">Chloroplast membrane</location>
        <topology evidence="1">Multi-pass membrane protein</topology>
    </subcellularLocation>
    <subcellularLocation>
        <location evidence="3">Plastid</location>
        <location evidence="3">Chloroplast envelope</location>
    </subcellularLocation>
</comment>
<comment type="disruption phenotype">
    <text evidence="3 4 5">Normal green leaves under continuous-light conditions (PubMed:30390180, PubMed:37339934). Delayed non-photochemical quenching (NPQ) relaxation during induction of photosynthesis at moderate light intensity (PubMed:29016945, PubMed:30390180). Higher NPQ during the high light period under fluctuating light conditions leading to pale green leaves (PubMed:29016945, PubMed:30390180, PubMed:37339934). The double mutant missing DLDG1 and FLAP1 (dldg1 flap1) has a pale-green phenotype similar to the dldlg1 simple mutant in continuous light, but a lighter pale-green aspect in fluctuating light and higher NPQ than in flap1 single mutant under short-day condition (PubMed:37339934). In the double mutant flap1 npq4, pale green leaves with reduced chlorophyll (Chl) content after exposure to fluctuating light, and similar NPQ kinetics and other photosynthetic parameters under constant or fluctuating actinic ligh than in the single mutant npq4 are observed (PubMed:30390180). However, after a prolonged exposure to fluctuating light, flap1 npq4 leaves become darker due to the accumulation of purple-colored anthocyanins (PubMed:30390180). The double mutant flap1 pgr5 exhibits recovered NPQ, photosystem II quantum yield and growth under fluctuating light, which are all impaired in the single mutant pgr5 (PubMed:30390180).</text>
</comment>
<comment type="similarity">
    <text evidence="7">Belongs to the FLAP family.</text>
</comment>
<comment type="sequence caution" evidence="7">
    <conflict type="erroneous gene model prediction">
        <sequence resource="EMBL-CDS" id="AAD25630"/>
    </conflict>
</comment>
<evidence type="ECO:0000255" key="1"/>
<evidence type="ECO:0000256" key="2">
    <source>
        <dbReference type="SAM" id="MobiDB-lite"/>
    </source>
</evidence>
<evidence type="ECO:0000269" key="3">
    <source>
    </source>
</evidence>
<evidence type="ECO:0000269" key="4">
    <source>
    </source>
</evidence>
<evidence type="ECO:0000269" key="5">
    <source>
    </source>
</evidence>
<evidence type="ECO:0000303" key="6">
    <source>
    </source>
</evidence>
<evidence type="ECO:0000305" key="7"/>
<evidence type="ECO:0000312" key="8">
    <source>
        <dbReference type="Araport" id="AT1G54520"/>
    </source>
</evidence>
<evidence type="ECO:0000312" key="9">
    <source>
        <dbReference type="EMBL" id="AAD25630.1"/>
    </source>
</evidence>